<protein>
    <recommendedName>
        <fullName>ATP-dependent RNA helicase SUB2-2</fullName>
        <ecNumber>3.6.4.13</ecNumber>
    </recommendedName>
</protein>
<comment type="function">
    <text evidence="1">ATP-binding RNA helicase involved in transcription elongation and required for the export of mRNA out of the nucleus. SUB2 also plays a role in pre-mRNA splicing and spliceosome assembly. May be involved in rDNA and telomeric silencing, and maintenance of genome integrity (By similarity).</text>
</comment>
<comment type="catalytic activity">
    <reaction>
        <text>ATP + H2O = ADP + phosphate + H(+)</text>
        <dbReference type="Rhea" id="RHEA:13065"/>
        <dbReference type="ChEBI" id="CHEBI:15377"/>
        <dbReference type="ChEBI" id="CHEBI:15378"/>
        <dbReference type="ChEBI" id="CHEBI:30616"/>
        <dbReference type="ChEBI" id="CHEBI:43474"/>
        <dbReference type="ChEBI" id="CHEBI:456216"/>
        <dbReference type="EC" id="3.6.4.13"/>
    </reaction>
</comment>
<comment type="subcellular location">
    <subcellularLocation>
        <location evidence="1">Nucleus</location>
    </subcellularLocation>
</comment>
<comment type="domain">
    <text>The Q motif is unique to and characteristic of the DEAD box family of RNA helicases and controls ATP binding and hydrolysis.</text>
</comment>
<comment type="similarity">
    <text evidence="4">Belongs to the DEAD box helicase family. DECD subfamily.</text>
</comment>
<accession>A7TJT7</accession>
<dbReference type="EC" id="3.6.4.13"/>
<dbReference type="EMBL" id="DS480403">
    <property type="protein sequence ID" value="EDO17516.1"/>
    <property type="molecule type" value="Genomic_DNA"/>
</dbReference>
<dbReference type="RefSeq" id="XP_001645374.1">
    <property type="nucleotide sequence ID" value="XM_001645324.1"/>
</dbReference>
<dbReference type="SMR" id="A7TJT7"/>
<dbReference type="FunCoup" id="A7TJT7">
    <property type="interactions" value="1359"/>
</dbReference>
<dbReference type="STRING" id="436907.A7TJT7"/>
<dbReference type="GeneID" id="5545734"/>
<dbReference type="KEGG" id="vpo:Kpol_1058p53"/>
<dbReference type="eggNOG" id="KOG0329">
    <property type="taxonomic scope" value="Eukaryota"/>
</dbReference>
<dbReference type="HOGENOM" id="CLU_003041_1_0_1"/>
<dbReference type="InParanoid" id="A7TJT7"/>
<dbReference type="OMA" id="RSKNWQQ"/>
<dbReference type="OrthoDB" id="10265785at2759"/>
<dbReference type="PhylomeDB" id="A7TJT7"/>
<dbReference type="Proteomes" id="UP000000267">
    <property type="component" value="Unassembled WGS sequence"/>
</dbReference>
<dbReference type="GO" id="GO:0005681">
    <property type="term" value="C:spliceosomal complex"/>
    <property type="evidence" value="ECO:0007669"/>
    <property type="project" value="UniProtKB-KW"/>
</dbReference>
<dbReference type="GO" id="GO:0005524">
    <property type="term" value="F:ATP binding"/>
    <property type="evidence" value="ECO:0007669"/>
    <property type="project" value="UniProtKB-KW"/>
</dbReference>
<dbReference type="GO" id="GO:0016887">
    <property type="term" value="F:ATP hydrolysis activity"/>
    <property type="evidence" value="ECO:0007669"/>
    <property type="project" value="RHEA"/>
</dbReference>
<dbReference type="GO" id="GO:0003723">
    <property type="term" value="F:RNA binding"/>
    <property type="evidence" value="ECO:0007669"/>
    <property type="project" value="UniProtKB-KW"/>
</dbReference>
<dbReference type="GO" id="GO:0003724">
    <property type="term" value="F:RNA helicase activity"/>
    <property type="evidence" value="ECO:0007669"/>
    <property type="project" value="UniProtKB-EC"/>
</dbReference>
<dbReference type="GO" id="GO:0006397">
    <property type="term" value="P:mRNA processing"/>
    <property type="evidence" value="ECO:0007669"/>
    <property type="project" value="UniProtKB-KW"/>
</dbReference>
<dbReference type="GO" id="GO:0051028">
    <property type="term" value="P:mRNA transport"/>
    <property type="evidence" value="ECO:0007669"/>
    <property type="project" value="UniProtKB-KW"/>
</dbReference>
<dbReference type="GO" id="GO:0008380">
    <property type="term" value="P:RNA splicing"/>
    <property type="evidence" value="ECO:0007669"/>
    <property type="project" value="UniProtKB-KW"/>
</dbReference>
<dbReference type="CDD" id="cd17950">
    <property type="entry name" value="DEADc_DDX39"/>
    <property type="match status" value="1"/>
</dbReference>
<dbReference type="CDD" id="cd18787">
    <property type="entry name" value="SF2_C_DEAD"/>
    <property type="match status" value="1"/>
</dbReference>
<dbReference type="FunFam" id="3.40.50.300:FF:000809">
    <property type="entry name" value="ATP-dependent RNA helicase SUB2"/>
    <property type="match status" value="1"/>
</dbReference>
<dbReference type="FunFam" id="3.40.50.300:FF:000111">
    <property type="entry name" value="DEAD-box ATP-dependent RNA helicase"/>
    <property type="match status" value="1"/>
</dbReference>
<dbReference type="Gene3D" id="3.40.50.300">
    <property type="entry name" value="P-loop containing nucleotide triphosphate hydrolases"/>
    <property type="match status" value="2"/>
</dbReference>
<dbReference type="InterPro" id="IPR011545">
    <property type="entry name" value="DEAD/DEAH_box_helicase_dom"/>
</dbReference>
<dbReference type="InterPro" id="IPR014001">
    <property type="entry name" value="Helicase_ATP-bd"/>
</dbReference>
<dbReference type="InterPro" id="IPR001650">
    <property type="entry name" value="Helicase_C-like"/>
</dbReference>
<dbReference type="InterPro" id="IPR027417">
    <property type="entry name" value="P-loop_NTPase"/>
</dbReference>
<dbReference type="InterPro" id="IPR014014">
    <property type="entry name" value="RNA_helicase_DEAD_Q_motif"/>
</dbReference>
<dbReference type="PANTHER" id="PTHR47958">
    <property type="entry name" value="ATP-DEPENDENT RNA HELICASE DBP3"/>
    <property type="match status" value="1"/>
</dbReference>
<dbReference type="Pfam" id="PF00270">
    <property type="entry name" value="DEAD"/>
    <property type="match status" value="1"/>
</dbReference>
<dbReference type="Pfam" id="PF00271">
    <property type="entry name" value="Helicase_C"/>
    <property type="match status" value="1"/>
</dbReference>
<dbReference type="SMART" id="SM00487">
    <property type="entry name" value="DEXDc"/>
    <property type="match status" value="1"/>
</dbReference>
<dbReference type="SMART" id="SM00490">
    <property type="entry name" value="HELICc"/>
    <property type="match status" value="1"/>
</dbReference>
<dbReference type="SUPFAM" id="SSF52540">
    <property type="entry name" value="P-loop containing nucleoside triphosphate hydrolases"/>
    <property type="match status" value="1"/>
</dbReference>
<dbReference type="PROSITE" id="PS51192">
    <property type="entry name" value="HELICASE_ATP_BIND_1"/>
    <property type="match status" value="1"/>
</dbReference>
<dbReference type="PROSITE" id="PS51194">
    <property type="entry name" value="HELICASE_CTER"/>
    <property type="match status" value="1"/>
</dbReference>
<dbReference type="PROSITE" id="PS51195">
    <property type="entry name" value="Q_MOTIF"/>
    <property type="match status" value="1"/>
</dbReference>
<feature type="chain" id="PRO_0000310224" description="ATP-dependent RNA helicase SUB2-2">
    <location>
        <begin position="1"/>
        <end position="442"/>
    </location>
</feature>
<feature type="domain" description="Helicase ATP-binding" evidence="2">
    <location>
        <begin position="89"/>
        <end position="264"/>
    </location>
</feature>
<feature type="domain" description="Helicase C-terminal" evidence="3">
    <location>
        <begin position="292"/>
        <end position="437"/>
    </location>
</feature>
<feature type="short sequence motif" description="Q motif">
    <location>
        <begin position="58"/>
        <end position="86"/>
    </location>
</feature>
<feature type="short sequence motif" description="DECD box">
    <location>
        <begin position="211"/>
        <end position="214"/>
    </location>
</feature>
<feature type="binding site" evidence="2">
    <location>
        <begin position="102"/>
        <end position="109"/>
    </location>
    <ligand>
        <name>ATP</name>
        <dbReference type="ChEBI" id="CHEBI:30616"/>
    </ligand>
</feature>
<gene>
    <name type="primary">SUB2-2</name>
    <name type="ORF">Kpol_1058p53</name>
</gene>
<evidence type="ECO:0000250" key="1"/>
<evidence type="ECO:0000255" key="2">
    <source>
        <dbReference type="PROSITE-ProRule" id="PRU00541"/>
    </source>
</evidence>
<evidence type="ECO:0000255" key="3">
    <source>
        <dbReference type="PROSITE-ProRule" id="PRU00542"/>
    </source>
</evidence>
<evidence type="ECO:0000305" key="4"/>
<organism>
    <name type="scientific">Vanderwaltozyma polyspora (strain ATCC 22028 / DSM 70294 / BCRC 21397 / CBS 2163 / NBRC 10782 / NRRL Y-8283 / UCD 57-17)</name>
    <name type="common">Kluyveromyces polysporus</name>
    <dbReference type="NCBI Taxonomy" id="436907"/>
    <lineage>
        <taxon>Eukaryota</taxon>
        <taxon>Fungi</taxon>
        <taxon>Dikarya</taxon>
        <taxon>Ascomycota</taxon>
        <taxon>Saccharomycotina</taxon>
        <taxon>Saccharomycetes</taxon>
        <taxon>Saccharomycetales</taxon>
        <taxon>Saccharomycetaceae</taxon>
        <taxon>Vanderwaltozyma</taxon>
    </lineage>
</organism>
<proteinExistence type="inferred from homology"/>
<keyword id="KW-0067">ATP-binding</keyword>
<keyword id="KW-0347">Helicase</keyword>
<keyword id="KW-0378">Hydrolase</keyword>
<keyword id="KW-0507">mRNA processing</keyword>
<keyword id="KW-0508">mRNA splicing</keyword>
<keyword id="KW-0509">mRNA transport</keyword>
<keyword id="KW-0547">Nucleotide-binding</keyword>
<keyword id="KW-0539">Nucleus</keyword>
<keyword id="KW-1185">Reference proteome</keyword>
<keyword id="KW-0694">RNA-binding</keyword>
<keyword id="KW-0747">Spliceosome</keyword>
<keyword id="KW-0813">Transport</keyword>
<name>SUB22_VANPO</name>
<sequence>MSHEGEEDLLEYSDNEQEIQVDATNINESAVDATVSETAEGATTDSEKKGSYVGIHSTGFKDFLLKPELARAIIDCGFEHPSEVQQHTIPQSIHGTDVLCQAKSGLGKTAVFVLSTLQQLDPVPGEVSVVVICNARELAYQIRNEYLRFSKYMPDVKTAVFYGGTPITKDAELLKNKETAPHIVVATPGRLKALVRDKLIDLSHVKNFVIDECDKVLEELDMRRDVQDIFRATPRDKQVMMFSATLSEEIRPICRRFLQNPLEIFVDDEAKLTLHGLQQYYIKLQENEKNRKLAQLLDDLEFNQVIIFVKSTKRANELTKLLNESNFPAITVHGNMKQAERIARYKAFKEFEKRICVSTDVFGRGIDIERINLAINYDLTTEADQYLHRVGRAGRFGTKGLAISFVSSPEDEEVLGKIQERFDVKIAEFPEEGIDPSTYLNN</sequence>
<reference key="1">
    <citation type="journal article" date="2007" name="Proc. Natl. Acad. Sci. U.S.A.">
        <title>Independent sorting-out of thousands of duplicated gene pairs in two yeast species descended from a whole-genome duplication.</title>
        <authorList>
            <person name="Scannell D.R."/>
            <person name="Frank A.C."/>
            <person name="Conant G.C."/>
            <person name="Byrne K.P."/>
            <person name="Woolfit M."/>
            <person name="Wolfe K.H."/>
        </authorList>
    </citation>
    <scope>NUCLEOTIDE SEQUENCE [LARGE SCALE GENOMIC DNA]</scope>
    <source>
        <strain>ATCC 22028 / DSM 70294 / BCRC 21397 / CBS 2163 / NBRC 10782 / NRRL Y-8283 / UCD 57-17</strain>
    </source>
</reference>